<sequence>MASKGAGMSFSRKSYRLTSDAEKSRVTGIVQEKLLNDYLNRIFSSSEHAPPAATSRKPLNFQNLPEHLDQLLQVDNEEEESQGQVEGRLGPSTVVLDHTGGFEGLLLVDDDLLGVIGHSNFGTIRSTTCVYKGKWLYEVLISSQGLMQIGWCTISCRFNQEEGVGDTHNSYAYDGNRVRKWNVTTTNYGKAWAAGDIVSCLIDLDDGTLSFCLNGVSLGTAFENLSRGLGMAYFPAISLSFKESVAFNFGSRPLRYPVAGYRPLQDPPSADLVRAQRLLGCFRAVLSVELDPVEGRLLDKESSKWRLRGQPTVLLTLAHIFHHFAPLLRKVYLVEAVLMSFLLGIVEKGTPTQAQSVVHQVLDLLWLFMEDYEVQDCLKQLMMSLLRLYRFSPIVPDLGLQIHYLRLTIAILRHEKSRKFLLSNVLFDVLRSVVFFYIKSPLRVEEAGLQELIPTTWWPHCSSREGKESTEMKEETAEERLRRRAYERGCQRLRKRIEVVEELQVQILKLLLDNKDDNGGEASRYIFLTKFRKFLQENASGRGNMPMLCPPEYMVCFLHRLISALRYYWDEYKASNPHASFSEEAYIPPQVFYNGKVDYFDLQRLGGLLSHLRKTLKDDLASKANIVIDPLELQSTAMDDLDEDEEPAPAMAQRPMQALAVGGPLPLPRPGWLSSPTLGRANRFLSTAAVSLMTPRRPLSTSEKVKVRTLSVEQRTREDIEGSHWNEGLLLGRPPEEPEQPLTENSLLEVLDGAVMMYNLSVHQQLGKMVGVSDDVNEYAMALRDTEDKLRRCPKRRKDILAELTKSQKVFSEKLDHLSRRLAWVHATVYSQEKMLDIYWLLRVCLRTIEHGDRTGSLFAFMPEFYLSVAINSYSALKNYFGPVHSMEELPGYEETLTRLAAILAKHFADARIVGTDIRDSLMQALASYVCYPHSLRAVERIPEEQRIAMVRNLLAPYEQRPWAQTNWILVRLWRGCGFGYRYTRLPHLLKTKLEDANLPSLQKPCPSTLLQQHMADLLQQGPDVAPSFLNSVLNQLNWAFSEFIGMIQEIQQAAERLERNFVDSRQLKVCATCFDLSVSLLRVLEMTITLVPEIFLDWTRPTSEMLLRRLAQLLNQVLNRVTAERNLFDRVVTLRLPGLESVDHYPILVAVTGILVQLLVRGPASEREQATSVLLADPCFQLRSICYLLGQPEPPAPGTALPAPDRKRFSLQSYADYISADELAQVEQMLAHLTSASAQAAAASLPTSEEDLCPICYAHPISAVFQPCGHKSCKACINQHLMNNKDCFFCKTTIVSVEDWEKGANTSTTSSAA</sequence>
<organism>
    <name type="scientific">Homo sapiens</name>
    <name type="common">Human</name>
    <dbReference type="NCBI Taxonomy" id="9606"/>
    <lineage>
        <taxon>Eukaryota</taxon>
        <taxon>Metazoa</taxon>
        <taxon>Chordata</taxon>
        <taxon>Craniata</taxon>
        <taxon>Vertebrata</taxon>
        <taxon>Euteleostomi</taxon>
        <taxon>Mammalia</taxon>
        <taxon>Eutheria</taxon>
        <taxon>Euarchontoglires</taxon>
        <taxon>Primates</taxon>
        <taxon>Haplorrhini</taxon>
        <taxon>Catarrhini</taxon>
        <taxon>Hominidae</taxon>
        <taxon>Homo</taxon>
    </lineage>
</organism>
<feature type="initiator methionine" description="Removed" evidence="19">
    <location>
        <position position="1"/>
    </location>
</feature>
<feature type="chain" id="PRO_0000250447" description="E3 ubiquitin-protein ligase RNF123">
    <location>
        <begin position="2"/>
        <end position="1314"/>
    </location>
</feature>
<feature type="domain" description="B30.2/SPRY" evidence="4">
    <location>
        <begin position="74"/>
        <end position="254"/>
    </location>
</feature>
<feature type="zinc finger region" description="RING-type" evidence="3">
    <location>
        <begin position="1254"/>
        <end position="1292"/>
    </location>
</feature>
<feature type="region of interest" description="Interaction with NFKB1" evidence="12">
    <location>
        <begin position="968"/>
        <end position="974"/>
    </location>
</feature>
<feature type="binding site" evidence="13 18">
    <location>
        <position position="1254"/>
    </location>
    <ligand>
        <name>Zn(2+)</name>
        <dbReference type="ChEBI" id="CHEBI:29105"/>
        <label>1</label>
    </ligand>
</feature>
<feature type="binding site" evidence="13 18">
    <location>
        <position position="1257"/>
    </location>
    <ligand>
        <name>Zn(2+)</name>
        <dbReference type="ChEBI" id="CHEBI:29105"/>
        <label>1</label>
    </ligand>
</feature>
<feature type="binding site" evidence="13 18">
    <location>
        <position position="1269"/>
    </location>
    <ligand>
        <name>Zn(2+)</name>
        <dbReference type="ChEBI" id="CHEBI:29105"/>
        <label>2</label>
    </ligand>
</feature>
<feature type="binding site" evidence="13 18">
    <location>
        <position position="1271"/>
    </location>
    <ligand>
        <name>Zn(2+)</name>
        <dbReference type="ChEBI" id="CHEBI:29105"/>
        <label>2</label>
    </ligand>
</feature>
<feature type="binding site" evidence="13 18">
    <location>
        <position position="1274"/>
    </location>
    <ligand>
        <name>Zn(2+)</name>
        <dbReference type="ChEBI" id="CHEBI:29105"/>
        <label>1</label>
    </ligand>
</feature>
<feature type="binding site" evidence="13 18">
    <location>
        <position position="1277"/>
    </location>
    <ligand>
        <name>Zn(2+)</name>
        <dbReference type="ChEBI" id="CHEBI:29105"/>
        <label>1</label>
    </ligand>
</feature>
<feature type="binding site" evidence="13 18">
    <location>
        <position position="1288"/>
    </location>
    <ligand>
        <name>Zn(2+)</name>
        <dbReference type="ChEBI" id="CHEBI:29105"/>
        <label>2</label>
    </ligand>
</feature>
<feature type="binding site" evidence="13 18">
    <location>
        <position position="1291"/>
    </location>
    <ligand>
        <name>Zn(2+)</name>
        <dbReference type="ChEBI" id="CHEBI:29105"/>
        <label>2</label>
    </ligand>
</feature>
<feature type="modified residue" description="N-acetylalanine" evidence="19">
    <location>
        <position position="2"/>
    </location>
</feature>
<feature type="modified residue" description="Phosphoserine" evidence="1">
    <location>
        <position position="675"/>
    </location>
</feature>
<feature type="modified residue" description="Asymmetric dimethylarginine" evidence="2">
    <location>
        <position position="683"/>
    </location>
</feature>
<feature type="splice variant" id="VSP_020650" description="In isoform 2." evidence="14">
    <original>IVSVEDWEKGANTSTTSSAA</original>
    <variation>TSNLLACLYPHWWEPSHGPNCA</variation>
    <location>
        <begin position="1295"/>
        <end position="1314"/>
    </location>
</feature>
<feature type="sequence variant" id="VAR_027561" description="In dbSNP:rs2960546.">
    <original>P</original>
    <variation>R</variation>
    <location>
        <position position="51"/>
    </location>
</feature>
<feature type="sequence variant" id="VAR_052106" description="In dbSNP:rs35620248.">
    <original>R</original>
    <variation>Q</variation>
    <location>
        <position position="387"/>
    </location>
</feature>
<feature type="sequence variant" id="VAR_052107" description="In dbSNP:rs35726701.">
    <original>K</original>
    <variation>E</variation>
    <location>
        <position position="596"/>
    </location>
</feature>
<feature type="sequence variant" id="VAR_052108" description="In dbSNP:rs34823813." evidence="5 6">
    <original>R</original>
    <variation>H</variation>
    <location>
        <position position="854"/>
    </location>
</feature>
<feature type="mutagenesis site" description="Abolished ability to bind and ubiquitinate NFKB1." evidence="12">
    <location>
        <begin position="968"/>
        <end position="974"/>
    </location>
</feature>
<feature type="mutagenesis site" description="Abolished E3 ubiquitin-protein ligase activity and ability to promote maturation of the NFKB1 component of NF-kappa-B." evidence="9">
    <original>I</original>
    <variation>A</variation>
    <location>
        <position position="1256"/>
    </location>
</feature>
<feature type="sequence conflict" description="In Ref. 5; BAB14139." evidence="16" ref="5">
    <original>K</original>
    <variation>R</variation>
    <location>
        <position position="809"/>
    </location>
</feature>
<feature type="strand" evidence="20">
    <location>
        <begin position="1250"/>
        <end position="1253"/>
    </location>
</feature>
<feature type="turn" evidence="20">
    <location>
        <begin position="1255"/>
        <end position="1257"/>
    </location>
</feature>
<feature type="strand" evidence="20">
    <location>
        <begin position="1258"/>
        <end position="1261"/>
    </location>
</feature>
<feature type="strand" evidence="20">
    <location>
        <begin position="1264"/>
        <end position="1267"/>
    </location>
</feature>
<feature type="turn" evidence="20">
    <location>
        <begin position="1268"/>
        <end position="1270"/>
    </location>
</feature>
<feature type="strand" evidence="20">
    <location>
        <begin position="1271"/>
        <end position="1273"/>
    </location>
</feature>
<feature type="helix" evidence="20">
    <location>
        <begin position="1275"/>
        <end position="1281"/>
    </location>
</feature>
<feature type="turn" evidence="20">
    <location>
        <begin position="1282"/>
        <end position="1284"/>
    </location>
</feature>
<feature type="strand" evidence="20">
    <location>
        <begin position="1296"/>
        <end position="1300"/>
    </location>
</feature>
<evidence type="ECO:0000250" key="1">
    <source>
        <dbReference type="UniProtKB" id="D3ZXK7"/>
    </source>
</evidence>
<evidence type="ECO:0000250" key="2">
    <source>
        <dbReference type="UniProtKB" id="Q5XPI3"/>
    </source>
</evidence>
<evidence type="ECO:0000255" key="3">
    <source>
        <dbReference type="PROSITE-ProRule" id="PRU00175"/>
    </source>
</evidence>
<evidence type="ECO:0000255" key="4">
    <source>
        <dbReference type="PROSITE-ProRule" id="PRU00548"/>
    </source>
</evidence>
<evidence type="ECO:0000269" key="5">
    <source>
    </source>
</evidence>
<evidence type="ECO:0000269" key="6">
    <source>
    </source>
</evidence>
<evidence type="ECO:0000269" key="7">
    <source>
    </source>
</evidence>
<evidence type="ECO:0000269" key="8">
    <source>
    </source>
</evidence>
<evidence type="ECO:0000269" key="9">
    <source>
    </source>
</evidence>
<evidence type="ECO:0000269" key="10">
    <source>
    </source>
</evidence>
<evidence type="ECO:0000269" key="11">
    <source>
    </source>
</evidence>
<evidence type="ECO:0000269" key="12">
    <source>
    </source>
</evidence>
<evidence type="ECO:0000269" key="13">
    <source ref="14"/>
</evidence>
<evidence type="ECO:0000303" key="14">
    <source>
    </source>
</evidence>
<evidence type="ECO:0000303" key="15">
    <source>
    </source>
</evidence>
<evidence type="ECO:0000305" key="16"/>
<evidence type="ECO:0000312" key="17">
    <source>
        <dbReference type="HGNC" id="HGNC:21148"/>
    </source>
</evidence>
<evidence type="ECO:0007744" key="18">
    <source>
        <dbReference type="PDB" id="2MA6"/>
    </source>
</evidence>
<evidence type="ECO:0007744" key="19">
    <source>
    </source>
</evidence>
<evidence type="ECO:0007829" key="20">
    <source>
        <dbReference type="PDB" id="2MA6"/>
    </source>
</evidence>
<gene>
    <name evidence="17" type="primary">RNF123</name>
    <name evidence="15" type="synonym">KPC1</name>
    <name type="ORF">FP1477</name>
</gene>
<reference key="1">
    <citation type="journal article" date="2004" name="Nat. Cell Biol.">
        <title>Cytoplasmic ubiquitin ligase KPC regulates proteolysis of p27(Kip1) at G1 phase.</title>
        <authorList>
            <person name="Kamura T."/>
            <person name="Hara T."/>
            <person name="Matsumoto M."/>
            <person name="Ishida N."/>
            <person name="Okumura F."/>
            <person name="Hatakeyama S."/>
            <person name="Yoshida M."/>
            <person name="Nakayama K."/>
            <person name="Nakayama K."/>
        </authorList>
    </citation>
    <scope>NUCLEOTIDE SEQUENCE [MRNA] (ISOFORM 1)</scope>
    <scope>FUNCTION</scope>
    <scope>CATALYTIC ACTIVITY</scope>
    <scope>SUBUNIT</scope>
    <scope>SUBCELLULAR LOCATION</scope>
</reference>
<reference key="2">
    <citation type="journal article" date="2006" name="Nature">
        <title>The DNA sequence, annotation and analysis of human chromosome 3.</title>
        <authorList>
            <person name="Muzny D.M."/>
            <person name="Scherer S.E."/>
            <person name="Kaul R."/>
            <person name="Wang J."/>
            <person name="Yu J."/>
            <person name="Sudbrak R."/>
            <person name="Buhay C.J."/>
            <person name="Chen R."/>
            <person name="Cree A."/>
            <person name="Ding Y."/>
            <person name="Dugan-Rocha S."/>
            <person name="Gill R."/>
            <person name="Gunaratne P."/>
            <person name="Harris R.A."/>
            <person name="Hawes A.C."/>
            <person name="Hernandez J."/>
            <person name="Hodgson A.V."/>
            <person name="Hume J."/>
            <person name="Jackson A."/>
            <person name="Khan Z.M."/>
            <person name="Kovar-Smith C."/>
            <person name="Lewis L.R."/>
            <person name="Lozado R.J."/>
            <person name="Metzker M.L."/>
            <person name="Milosavljevic A."/>
            <person name="Miner G.R."/>
            <person name="Morgan M.B."/>
            <person name="Nazareth L.V."/>
            <person name="Scott G."/>
            <person name="Sodergren E."/>
            <person name="Song X.-Z."/>
            <person name="Steffen D."/>
            <person name="Wei S."/>
            <person name="Wheeler D.A."/>
            <person name="Wright M.W."/>
            <person name="Worley K.C."/>
            <person name="Yuan Y."/>
            <person name="Zhang Z."/>
            <person name="Adams C.Q."/>
            <person name="Ansari-Lari M.A."/>
            <person name="Ayele M."/>
            <person name="Brown M.J."/>
            <person name="Chen G."/>
            <person name="Chen Z."/>
            <person name="Clendenning J."/>
            <person name="Clerc-Blankenburg K.P."/>
            <person name="Chen R."/>
            <person name="Chen Z."/>
            <person name="Davis C."/>
            <person name="Delgado O."/>
            <person name="Dinh H.H."/>
            <person name="Dong W."/>
            <person name="Draper H."/>
            <person name="Ernst S."/>
            <person name="Fu G."/>
            <person name="Gonzalez-Garay M.L."/>
            <person name="Garcia D.K."/>
            <person name="Gillett W."/>
            <person name="Gu J."/>
            <person name="Hao B."/>
            <person name="Haugen E."/>
            <person name="Havlak P."/>
            <person name="He X."/>
            <person name="Hennig S."/>
            <person name="Hu S."/>
            <person name="Huang W."/>
            <person name="Jackson L.R."/>
            <person name="Jacob L.S."/>
            <person name="Kelly S.H."/>
            <person name="Kube M."/>
            <person name="Levy R."/>
            <person name="Li Z."/>
            <person name="Liu B."/>
            <person name="Liu J."/>
            <person name="Liu W."/>
            <person name="Lu J."/>
            <person name="Maheshwari M."/>
            <person name="Nguyen B.-V."/>
            <person name="Okwuonu G.O."/>
            <person name="Palmeiri A."/>
            <person name="Pasternak S."/>
            <person name="Perez L.M."/>
            <person name="Phelps K.A."/>
            <person name="Plopper F.J."/>
            <person name="Qiang B."/>
            <person name="Raymond C."/>
            <person name="Rodriguez R."/>
            <person name="Saenphimmachak C."/>
            <person name="Santibanez J."/>
            <person name="Shen H."/>
            <person name="Shen Y."/>
            <person name="Subramanian S."/>
            <person name="Tabor P.E."/>
            <person name="Verduzco D."/>
            <person name="Waldron L."/>
            <person name="Wang J."/>
            <person name="Wang J."/>
            <person name="Wang Q."/>
            <person name="Williams G.A."/>
            <person name="Wong G.K.-S."/>
            <person name="Yao Z."/>
            <person name="Zhang J."/>
            <person name="Zhang X."/>
            <person name="Zhao G."/>
            <person name="Zhou J."/>
            <person name="Zhou Y."/>
            <person name="Nelson D."/>
            <person name="Lehrach H."/>
            <person name="Reinhardt R."/>
            <person name="Naylor S.L."/>
            <person name="Yang H."/>
            <person name="Olson M."/>
            <person name="Weinstock G."/>
            <person name="Gibbs R.A."/>
        </authorList>
    </citation>
    <scope>NUCLEOTIDE SEQUENCE [LARGE SCALE GENOMIC DNA]</scope>
</reference>
<reference key="3">
    <citation type="journal article" date="2004" name="Genome Res.">
        <title>The status, quality, and expansion of the NIH full-length cDNA project: the Mammalian Gene Collection (MGC).</title>
        <authorList>
            <consortium name="The MGC Project Team"/>
        </authorList>
    </citation>
    <scope>NUCLEOTIDE SEQUENCE [LARGE SCALE MRNA] (ISOFORM 1)</scope>
    <scope>VARIANT HIS-854</scope>
    <source>
        <tissue>Brain</tissue>
        <tissue>Eye</tissue>
        <tissue>Lung</tissue>
        <tissue>Uterus</tissue>
    </source>
</reference>
<reference key="4">
    <citation type="journal article" date="2004" name="Proc. Natl. Acad. Sci. U.S.A.">
        <title>Large-scale cDNA transfection screening for genes related to cancer development and progression.</title>
        <authorList>
            <person name="Wan D."/>
            <person name="Gong Y."/>
            <person name="Qin W."/>
            <person name="Zhang P."/>
            <person name="Li J."/>
            <person name="Wei L."/>
            <person name="Zhou X."/>
            <person name="Li H."/>
            <person name="Qiu X."/>
            <person name="Zhong F."/>
            <person name="He L."/>
            <person name="Yu J."/>
            <person name="Yao G."/>
            <person name="Jiang H."/>
            <person name="Qian L."/>
            <person name="Yu Y."/>
            <person name="Shu H."/>
            <person name="Chen X."/>
            <person name="Xu H."/>
            <person name="Guo M."/>
            <person name="Pan Z."/>
            <person name="Chen Y."/>
            <person name="Ge C."/>
            <person name="Yang S."/>
            <person name="Gu J."/>
        </authorList>
    </citation>
    <scope>NUCLEOTIDE SEQUENCE [LARGE SCALE MRNA] OF 545-1314 (ISOFORM 1)</scope>
</reference>
<reference key="5">
    <citation type="journal article" date="2004" name="Nat. Genet.">
        <title>Complete sequencing and characterization of 21,243 full-length human cDNAs.</title>
        <authorList>
            <person name="Ota T."/>
            <person name="Suzuki Y."/>
            <person name="Nishikawa T."/>
            <person name="Otsuki T."/>
            <person name="Sugiyama T."/>
            <person name="Irie R."/>
            <person name="Wakamatsu A."/>
            <person name="Hayashi K."/>
            <person name="Sato H."/>
            <person name="Nagai K."/>
            <person name="Kimura K."/>
            <person name="Makita H."/>
            <person name="Sekine M."/>
            <person name="Obayashi M."/>
            <person name="Nishi T."/>
            <person name="Shibahara T."/>
            <person name="Tanaka T."/>
            <person name="Ishii S."/>
            <person name="Yamamoto J."/>
            <person name="Saito K."/>
            <person name="Kawai Y."/>
            <person name="Isono Y."/>
            <person name="Nakamura Y."/>
            <person name="Nagahari K."/>
            <person name="Murakami K."/>
            <person name="Yasuda T."/>
            <person name="Iwayanagi T."/>
            <person name="Wagatsuma M."/>
            <person name="Shiratori A."/>
            <person name="Sudo H."/>
            <person name="Hosoiri T."/>
            <person name="Kaku Y."/>
            <person name="Kodaira H."/>
            <person name="Kondo H."/>
            <person name="Sugawara M."/>
            <person name="Takahashi M."/>
            <person name="Kanda K."/>
            <person name="Yokoi T."/>
            <person name="Furuya T."/>
            <person name="Kikkawa E."/>
            <person name="Omura Y."/>
            <person name="Abe K."/>
            <person name="Kamihara K."/>
            <person name="Katsuta N."/>
            <person name="Sato K."/>
            <person name="Tanikawa M."/>
            <person name="Yamazaki M."/>
            <person name="Ninomiya K."/>
            <person name="Ishibashi T."/>
            <person name="Yamashita H."/>
            <person name="Murakawa K."/>
            <person name="Fujimori K."/>
            <person name="Tanai H."/>
            <person name="Kimata M."/>
            <person name="Watanabe M."/>
            <person name="Hiraoka S."/>
            <person name="Chiba Y."/>
            <person name="Ishida S."/>
            <person name="Ono Y."/>
            <person name="Takiguchi S."/>
            <person name="Watanabe S."/>
            <person name="Yosida M."/>
            <person name="Hotuta T."/>
            <person name="Kusano J."/>
            <person name="Kanehori K."/>
            <person name="Takahashi-Fujii A."/>
            <person name="Hara H."/>
            <person name="Tanase T.-O."/>
            <person name="Nomura Y."/>
            <person name="Togiya S."/>
            <person name="Komai F."/>
            <person name="Hara R."/>
            <person name="Takeuchi K."/>
            <person name="Arita M."/>
            <person name="Imose N."/>
            <person name="Musashino K."/>
            <person name="Yuuki H."/>
            <person name="Oshima A."/>
            <person name="Sasaki N."/>
            <person name="Aotsuka S."/>
            <person name="Yoshikawa Y."/>
            <person name="Matsunawa H."/>
            <person name="Ichihara T."/>
            <person name="Shiohata N."/>
            <person name="Sano S."/>
            <person name="Moriya S."/>
            <person name="Momiyama H."/>
            <person name="Satoh N."/>
            <person name="Takami S."/>
            <person name="Terashima Y."/>
            <person name="Suzuki O."/>
            <person name="Nakagawa S."/>
            <person name="Senoh A."/>
            <person name="Mizoguchi H."/>
            <person name="Goto Y."/>
            <person name="Shimizu F."/>
            <person name="Wakebe H."/>
            <person name="Hishigaki H."/>
            <person name="Watanabe T."/>
            <person name="Sugiyama A."/>
            <person name="Takemoto M."/>
            <person name="Kawakami B."/>
            <person name="Yamazaki M."/>
            <person name="Watanabe K."/>
            <person name="Kumagai A."/>
            <person name="Itakura S."/>
            <person name="Fukuzumi Y."/>
            <person name="Fujimori Y."/>
            <person name="Komiyama M."/>
            <person name="Tashiro H."/>
            <person name="Tanigami A."/>
            <person name="Fujiwara T."/>
            <person name="Ono T."/>
            <person name="Yamada K."/>
            <person name="Fujii Y."/>
            <person name="Ozaki K."/>
            <person name="Hirao M."/>
            <person name="Ohmori Y."/>
            <person name="Kawabata A."/>
            <person name="Hikiji T."/>
            <person name="Kobatake N."/>
            <person name="Inagaki H."/>
            <person name="Ikema Y."/>
            <person name="Okamoto S."/>
            <person name="Okitani R."/>
            <person name="Kawakami T."/>
            <person name="Noguchi S."/>
            <person name="Itoh T."/>
            <person name="Shigeta K."/>
            <person name="Senba T."/>
            <person name="Matsumura K."/>
            <person name="Nakajima Y."/>
            <person name="Mizuno T."/>
            <person name="Morinaga M."/>
            <person name="Sasaki M."/>
            <person name="Togashi T."/>
            <person name="Oyama M."/>
            <person name="Hata H."/>
            <person name="Watanabe M."/>
            <person name="Komatsu T."/>
            <person name="Mizushima-Sugano J."/>
            <person name="Satoh T."/>
            <person name="Shirai Y."/>
            <person name="Takahashi Y."/>
            <person name="Nakagawa K."/>
            <person name="Okumura K."/>
            <person name="Nagase T."/>
            <person name="Nomura N."/>
            <person name="Kikuchi H."/>
            <person name="Masuho Y."/>
            <person name="Yamashita R."/>
            <person name="Nakai K."/>
            <person name="Yada T."/>
            <person name="Nakamura Y."/>
            <person name="Ohara O."/>
            <person name="Isogai T."/>
            <person name="Sugano S."/>
        </authorList>
    </citation>
    <scope>NUCLEOTIDE SEQUENCE [LARGE SCALE MRNA] OF 535-1314 (ISOFORMS 1 AND 2)</scope>
    <scope>VARIANT HIS-854</scope>
</reference>
<reference key="6">
    <citation type="journal article" date="2001" name="Genome Res.">
        <title>Towards a catalog of human genes and proteins: sequencing and analysis of 500 novel complete protein coding human cDNAs.</title>
        <authorList>
            <person name="Wiemann S."/>
            <person name="Weil B."/>
            <person name="Wellenreuther R."/>
            <person name="Gassenhuber J."/>
            <person name="Glassl S."/>
            <person name="Ansorge W."/>
            <person name="Boecher M."/>
            <person name="Bloecker H."/>
            <person name="Bauersachs S."/>
            <person name="Blum H."/>
            <person name="Lauber J."/>
            <person name="Duesterhoeft A."/>
            <person name="Beyer A."/>
            <person name="Koehrer K."/>
            <person name="Strack N."/>
            <person name="Mewes H.-W."/>
            <person name="Ottenwaelder B."/>
            <person name="Obermaier B."/>
            <person name="Tampe J."/>
            <person name="Heubner D."/>
            <person name="Wambutt R."/>
            <person name="Korn B."/>
            <person name="Klein M."/>
            <person name="Poustka A."/>
        </authorList>
    </citation>
    <scope>NUCLEOTIDE SEQUENCE [LARGE SCALE MRNA] OF 892-1314 (ISOFORM 1)</scope>
    <source>
        <tissue>Testis</tissue>
    </source>
</reference>
<reference key="7">
    <citation type="journal article" date="2005" name="Mol. Cell. Biol.">
        <title>Role of the UBL-UBA protein KPC2 in degradation of p27 at G1 phase of the cell cycle.</title>
        <authorList>
            <person name="Hara T."/>
            <person name="Kamura T."/>
            <person name="Kotoshiba S."/>
            <person name="Takahashi H."/>
            <person name="Fujiwara K."/>
            <person name="Onoyama I."/>
            <person name="Shirakawa M."/>
            <person name="Mizushima N."/>
            <person name="Nakayama K."/>
        </authorList>
    </citation>
    <scope>FUNCTION</scope>
    <scope>CATALYTIC ACTIVITY</scope>
    <scope>SUBUNIT</scope>
</reference>
<reference key="8">
    <citation type="journal article" date="2011" name="BMC Syst. Biol.">
        <title>Initial characterization of the human central proteome.</title>
        <authorList>
            <person name="Burkard T.R."/>
            <person name="Planyavsky M."/>
            <person name="Kaupe I."/>
            <person name="Breitwieser F.P."/>
            <person name="Buerckstuemmer T."/>
            <person name="Bennett K.L."/>
            <person name="Superti-Furga G."/>
            <person name="Colinge J."/>
        </authorList>
    </citation>
    <scope>IDENTIFICATION BY MASS SPECTROMETRY [LARGE SCALE ANALYSIS]</scope>
</reference>
<reference key="9">
    <citation type="journal article" date="2012" name="Proc. Natl. Acad. Sci. U.S.A.">
        <title>N-terminal acetylome analyses and functional insights of the N-terminal acetyltransferase NatB.</title>
        <authorList>
            <person name="Van Damme P."/>
            <person name="Lasa M."/>
            <person name="Polevoda B."/>
            <person name="Gazquez C."/>
            <person name="Elosegui-Artola A."/>
            <person name="Kim D.S."/>
            <person name="De Juan-Pardo E."/>
            <person name="Demeyer K."/>
            <person name="Hole K."/>
            <person name="Larrea E."/>
            <person name="Timmerman E."/>
            <person name="Prieto J."/>
            <person name="Arnesen T."/>
            <person name="Sherman F."/>
            <person name="Gevaert K."/>
            <person name="Aldabe R."/>
        </authorList>
    </citation>
    <scope>ACETYLATION [LARGE SCALE ANALYSIS] AT ALA-2</scope>
    <scope>CLEAVAGE OF INITIATOR METHIONINE [LARGE SCALE ANALYSIS]</scope>
    <scope>IDENTIFICATION BY MASS SPECTROMETRY [LARGE SCALE ANALYSIS]</scope>
</reference>
<reference key="10">
    <citation type="journal article" date="2015" name="Cell">
        <title>KPC1-mediated ubiquitination and proteasomal processing of NF-kappaB1 p105 to p50 restricts tumor growth.</title>
        <authorList>
            <person name="Kravtsova-Ivantsiv Y."/>
            <person name="Shomer I."/>
            <person name="Cohen-Kaplan V."/>
            <person name="Snijder B."/>
            <person name="Superti-Furga G."/>
            <person name="Gonen H."/>
            <person name="Sommer T."/>
            <person name="Ziv T."/>
            <person name="Admon A."/>
            <person name="Naroditsky I."/>
            <person name="Jbara M."/>
            <person name="Brik A."/>
            <person name="Pikarsky E."/>
            <person name="Kwon Y.T."/>
            <person name="Doweck I."/>
            <person name="Ciechanover A."/>
        </authorList>
    </citation>
    <scope>FUNCTION</scope>
    <scope>CATALYTIC ACTIVITY</scope>
    <scope>PATHWAY</scope>
    <scope>MUTAGENESIS OF ILE-1256</scope>
</reference>
<reference key="11">
    <citation type="journal article" date="2016" name="EMBO Rep.">
        <title>RNF123 has an E3 ligase-independent function in RIG-I-like receptor-mediated antiviral signaling.</title>
        <authorList>
            <person name="Wang S."/>
            <person name="Yang Y.K."/>
            <person name="Chen T."/>
            <person name="Zhang H."/>
            <person name="Yang W.W."/>
            <person name="Song S.S."/>
            <person name="Zhai Z.H."/>
            <person name="Chen D.Y."/>
        </authorList>
    </citation>
    <scope>FUNCTION</scope>
    <scope>INTERACTION WITH RIGI AND IFIH1</scope>
    <scope>SUBCELLULAR LOCATION</scope>
</reference>
<reference key="12">
    <citation type="journal article" date="2020" name="Proc. Natl. Acad. Sci. U.S.A.">
        <title>Excess of the NF-kB p50 subunit generated by the ubiquitin ligase KPC1 suppresses tumors via PD-L1- and chemokines-mediated mechanisms.</title>
        <authorList>
            <person name="Kravtsova-Ivantsiv Y."/>
            <person name="Goldhirsh G."/>
            <person name="Ivantsiv A."/>
            <person name="Ben Itzhak O."/>
            <person name="Kwon Y.T."/>
            <person name="Pikarsky E."/>
            <person name="Ciechanover A."/>
        </authorList>
    </citation>
    <scope>FUNCTION</scope>
    <scope>PATHWAY</scope>
</reference>
<reference key="13">
    <citation type="journal article" date="2021" name="Proc. Natl. Acad. Sci. U.S.A.">
        <title>A short binding site in the KPC1 ubiquitin ligase mediates processing of NF-kappaB1 p105 to p50: A potential for a tumor-suppressive PROTAC.</title>
        <authorList>
            <person name="Goldhirsh G."/>
            <person name="Kravtsova-Ivantsiv Y."/>
            <person name="Satish G."/>
            <person name="Ziv T."/>
            <person name="Brik A."/>
            <person name="Ciechanover A."/>
        </authorList>
    </citation>
    <scope>FUNCTION</scope>
    <scope>PATHWAY</scope>
    <scope>BIOTECHNOLOGY</scope>
    <scope>MUTAGENESIS OF 968-TRP--TRP-974</scope>
</reference>
<reference evidence="18" key="14">
    <citation type="submission" date="2013-06" db="PDB data bank">
        <title>Solution NMR Structure of the RING finger domain from the Kip1 ubiquitination-promoting E3 complex protein 1 (KPC1/RNF123) from Homo sapiens, Northeast Structural Genomics Consortium (NESG) Target HR8700A.</title>
        <authorList>
            <person name="Ramelot T.A."/>
            <person name="Yang Y."/>
            <person name="Janjua H."/>
            <person name="Kohan E."/>
            <person name="Wang H."/>
            <person name="Xiao R."/>
            <person name="Acton T.B."/>
            <person name="Everett J.K."/>
            <person name="Montelione G.T."/>
            <person name="Kennedy M.A."/>
        </authorList>
    </citation>
    <scope>STRUCTURE BY NMR OF 1247-1304 IN COMPLEX WITH ZINC</scope>
</reference>
<protein>
    <recommendedName>
        <fullName evidence="16">E3 ubiquitin-protein ligase RNF123</fullName>
        <ecNumber evidence="7 8 9">2.3.2.27</ecNumber>
    </recommendedName>
    <alternativeName>
        <fullName evidence="15">Kip1 ubiquitination-promoting complex protein 1</fullName>
    </alternativeName>
    <alternativeName>
        <fullName>RING finger protein 123</fullName>
    </alternativeName>
</protein>
<accession>Q5XPI4</accession>
<accession>A1L4Q3</accession>
<accession>A6NLS5</accession>
<accession>Q5I022</accession>
<accession>Q6PFW4</accession>
<accession>Q71RH0</accession>
<accession>Q8IW18</accession>
<accession>Q9H0M8</accession>
<accession>Q9H5L8</accession>
<accession>Q9H9T2</accession>
<dbReference type="EC" id="2.3.2.27" evidence="7 8 9"/>
<dbReference type="EMBL" id="AY744152">
    <property type="protein sequence ID" value="AAU93470.1"/>
    <property type="molecule type" value="mRNA"/>
</dbReference>
<dbReference type="EMBL" id="AC099668">
    <property type="status" value="NOT_ANNOTATED_CDS"/>
    <property type="molecule type" value="Genomic_DNA"/>
</dbReference>
<dbReference type="EMBL" id="BC041145">
    <property type="protein sequence ID" value="AAH41145.1"/>
    <property type="molecule type" value="mRNA"/>
</dbReference>
<dbReference type="EMBL" id="BC057392">
    <property type="protein sequence ID" value="AAH57392.2"/>
    <property type="molecule type" value="mRNA"/>
</dbReference>
<dbReference type="EMBL" id="BC088801">
    <property type="protein sequence ID" value="AAH88801.1"/>
    <property type="molecule type" value="mRNA"/>
</dbReference>
<dbReference type="EMBL" id="BC130632">
    <property type="protein sequence ID" value="AAI30633.1"/>
    <property type="molecule type" value="mRNA"/>
</dbReference>
<dbReference type="EMBL" id="AF370367">
    <property type="protein sequence ID" value="AAQ15203.1"/>
    <property type="molecule type" value="mRNA"/>
</dbReference>
<dbReference type="EMBL" id="AK022627">
    <property type="protein sequence ID" value="BAB14139.1"/>
    <property type="status" value="ALT_INIT"/>
    <property type="molecule type" value="mRNA"/>
</dbReference>
<dbReference type="EMBL" id="AK026968">
    <property type="protein sequence ID" value="BAB15607.1"/>
    <property type="status" value="ALT_INIT"/>
    <property type="molecule type" value="mRNA"/>
</dbReference>
<dbReference type="EMBL" id="AL136729">
    <property type="protein sequence ID" value="CAB66663.2"/>
    <property type="molecule type" value="mRNA"/>
</dbReference>
<dbReference type="CCDS" id="CCDS33758.1">
    <molecule id="Q5XPI4-1"/>
</dbReference>
<dbReference type="RefSeq" id="NP_071347.2">
    <molecule id="Q5XPI4-1"/>
    <property type="nucleotide sequence ID" value="NM_022064.4"/>
</dbReference>
<dbReference type="RefSeq" id="XP_006713348.1">
    <property type="nucleotide sequence ID" value="XM_006713285.1"/>
</dbReference>
<dbReference type="RefSeq" id="XP_011532297.1">
    <property type="nucleotide sequence ID" value="XM_011533995.1"/>
</dbReference>
<dbReference type="RefSeq" id="XP_016862507.1">
    <property type="nucleotide sequence ID" value="XM_017007018.1"/>
</dbReference>
<dbReference type="PDB" id="2MA6">
    <property type="method" value="NMR"/>
    <property type="chains" value="A=1247-1304"/>
</dbReference>
<dbReference type="PDBsum" id="2MA6"/>
<dbReference type="SMR" id="Q5XPI4"/>
<dbReference type="BioGRID" id="121971">
    <property type="interactions" value="825"/>
</dbReference>
<dbReference type="ComplexPortal" id="CPX-7801">
    <property type="entry name" value="KPC E3 ubiquitin ligase complex"/>
</dbReference>
<dbReference type="CORUM" id="Q5XPI4"/>
<dbReference type="FunCoup" id="Q5XPI4">
    <property type="interactions" value="1808"/>
</dbReference>
<dbReference type="IntAct" id="Q5XPI4">
    <property type="interactions" value="67"/>
</dbReference>
<dbReference type="MINT" id="Q5XPI4"/>
<dbReference type="STRING" id="9606.ENSP00000328287"/>
<dbReference type="GlyGen" id="Q5XPI4">
    <property type="glycosylation" value="10 sites, 1 N-linked glycan (1 site), 1 O-linked glycan (9 sites)"/>
</dbReference>
<dbReference type="iPTMnet" id="Q5XPI4"/>
<dbReference type="PhosphoSitePlus" id="Q5XPI4"/>
<dbReference type="BioMuta" id="RNF123"/>
<dbReference type="DMDM" id="74748090"/>
<dbReference type="jPOST" id="Q5XPI4"/>
<dbReference type="MassIVE" id="Q5XPI4"/>
<dbReference type="PaxDb" id="9606-ENSP00000328287"/>
<dbReference type="PeptideAtlas" id="Q5XPI4"/>
<dbReference type="ProteomicsDB" id="65842">
    <molecule id="Q5XPI4-1"/>
</dbReference>
<dbReference type="ProteomicsDB" id="65843">
    <molecule id="Q5XPI4-2"/>
</dbReference>
<dbReference type="Pumba" id="Q5XPI4"/>
<dbReference type="Antibodypedia" id="30603">
    <property type="antibodies" value="106 antibodies from 19 providers"/>
</dbReference>
<dbReference type="DNASU" id="63891"/>
<dbReference type="Ensembl" id="ENST00000327697.11">
    <molecule id="Q5XPI4-1"/>
    <property type="protein sequence ID" value="ENSP00000328287.6"/>
    <property type="gene ID" value="ENSG00000164068.16"/>
</dbReference>
<dbReference type="GeneID" id="63891"/>
<dbReference type="KEGG" id="hsa:63891"/>
<dbReference type="MANE-Select" id="ENST00000327697.11">
    <property type="protein sequence ID" value="ENSP00000328287.6"/>
    <property type="RefSeq nucleotide sequence ID" value="NM_022064.5"/>
    <property type="RefSeq protein sequence ID" value="NP_071347.2"/>
</dbReference>
<dbReference type="UCSC" id="uc003cxh.5">
    <molecule id="Q5XPI4-1"/>
    <property type="organism name" value="human"/>
</dbReference>
<dbReference type="AGR" id="HGNC:21148"/>
<dbReference type="CTD" id="63891"/>
<dbReference type="DisGeNET" id="63891"/>
<dbReference type="GeneCards" id="RNF123"/>
<dbReference type="HGNC" id="HGNC:21148">
    <property type="gene designation" value="RNF123"/>
</dbReference>
<dbReference type="HPA" id="ENSG00000164068">
    <property type="expression patterns" value="Tissue enhanced (skeletal muscle, tongue)"/>
</dbReference>
<dbReference type="MalaCards" id="RNF123"/>
<dbReference type="MIM" id="614472">
    <property type="type" value="gene"/>
</dbReference>
<dbReference type="neXtProt" id="NX_Q5XPI4"/>
<dbReference type="OpenTargets" id="ENSG00000164068"/>
<dbReference type="PharmGKB" id="PA134916827"/>
<dbReference type="VEuPathDB" id="HostDB:ENSG00000164068"/>
<dbReference type="eggNOG" id="KOG2242">
    <property type="taxonomic scope" value="Eukaryota"/>
</dbReference>
<dbReference type="eggNOG" id="KOG4692">
    <property type="taxonomic scope" value="Eukaryota"/>
</dbReference>
<dbReference type="GeneTree" id="ENSGT00940000155781"/>
<dbReference type="HOGENOM" id="CLU_006687_2_0_1"/>
<dbReference type="InParanoid" id="Q5XPI4"/>
<dbReference type="OMA" id="LCCFHRL"/>
<dbReference type="OrthoDB" id="258495at2759"/>
<dbReference type="PAN-GO" id="Q5XPI4">
    <property type="GO annotations" value="3 GO annotations based on evolutionary models"/>
</dbReference>
<dbReference type="PhylomeDB" id="Q5XPI4"/>
<dbReference type="TreeFam" id="TF313546"/>
<dbReference type="PathwayCommons" id="Q5XPI4"/>
<dbReference type="Reactome" id="R-HSA-5689880">
    <property type="pathway name" value="Ub-specific processing proteases"/>
</dbReference>
<dbReference type="Reactome" id="R-HSA-983168">
    <property type="pathway name" value="Antigen processing: Ubiquitination &amp; Proteasome degradation"/>
</dbReference>
<dbReference type="SignaLink" id="Q5XPI4"/>
<dbReference type="SIGNOR" id="Q5XPI4"/>
<dbReference type="UniPathway" id="UPA00143"/>
<dbReference type="BioGRID-ORCS" id="63891">
    <property type="hits" value="76 hits in 1192 CRISPR screens"/>
</dbReference>
<dbReference type="ChiTaRS" id="RNF123">
    <property type="organism name" value="human"/>
</dbReference>
<dbReference type="EvolutionaryTrace" id="Q5XPI4"/>
<dbReference type="GeneWiki" id="RNF123"/>
<dbReference type="GenomeRNAi" id="63891"/>
<dbReference type="Pharos" id="Q5XPI4">
    <property type="development level" value="Tbio"/>
</dbReference>
<dbReference type="PRO" id="PR:Q5XPI4"/>
<dbReference type="Proteomes" id="UP000005640">
    <property type="component" value="Chromosome 3"/>
</dbReference>
<dbReference type="RNAct" id="Q5XPI4">
    <property type="molecule type" value="protein"/>
</dbReference>
<dbReference type="Bgee" id="ENSG00000164068">
    <property type="expression patterns" value="Expressed in hindlimb stylopod muscle and 181 other cell types or tissues"/>
</dbReference>
<dbReference type="ExpressionAtlas" id="Q5XPI4">
    <property type="expression patterns" value="baseline and differential"/>
</dbReference>
<dbReference type="GO" id="GO:0005737">
    <property type="term" value="C:cytoplasm"/>
    <property type="evidence" value="ECO:0000314"/>
    <property type="project" value="UniProtKB"/>
</dbReference>
<dbReference type="GO" id="GO:0005829">
    <property type="term" value="C:cytosol"/>
    <property type="evidence" value="ECO:0000314"/>
    <property type="project" value="HPA"/>
</dbReference>
<dbReference type="GO" id="GO:0031965">
    <property type="term" value="C:nuclear membrane"/>
    <property type="evidence" value="ECO:0000314"/>
    <property type="project" value="HPA"/>
</dbReference>
<dbReference type="GO" id="GO:0061630">
    <property type="term" value="F:ubiquitin protein ligase activity"/>
    <property type="evidence" value="ECO:0000314"/>
    <property type="project" value="UniProtKB"/>
</dbReference>
<dbReference type="GO" id="GO:0004842">
    <property type="term" value="F:ubiquitin-protein transferase activity"/>
    <property type="evidence" value="ECO:0000318"/>
    <property type="project" value="GO_Central"/>
</dbReference>
<dbReference type="GO" id="GO:0008270">
    <property type="term" value="F:zinc ion binding"/>
    <property type="evidence" value="ECO:0007669"/>
    <property type="project" value="UniProtKB-KW"/>
</dbReference>
<dbReference type="GO" id="GO:0051604">
    <property type="term" value="P:protein maturation"/>
    <property type="evidence" value="ECO:0000314"/>
    <property type="project" value="UniProtKB"/>
</dbReference>
<dbReference type="GO" id="GO:0000209">
    <property type="term" value="P:protein polyubiquitination"/>
    <property type="evidence" value="ECO:0000314"/>
    <property type="project" value="UniProt"/>
</dbReference>
<dbReference type="GO" id="GO:0051603">
    <property type="term" value="P:proteolysis involved in protein catabolic process"/>
    <property type="evidence" value="ECO:0000318"/>
    <property type="project" value="GO_Central"/>
</dbReference>
<dbReference type="GO" id="GO:0006511">
    <property type="term" value="P:ubiquitin-dependent protein catabolic process"/>
    <property type="evidence" value="ECO:0000314"/>
    <property type="project" value="UniProtKB"/>
</dbReference>
<dbReference type="CDD" id="cd16541">
    <property type="entry name" value="RING-HC_RNF123"/>
    <property type="match status" value="1"/>
</dbReference>
<dbReference type="CDD" id="cd12882">
    <property type="entry name" value="SPRY_RNF123"/>
    <property type="match status" value="1"/>
</dbReference>
<dbReference type="FunFam" id="2.60.120.920:FF:000031">
    <property type="entry name" value="E3 ubiquitin-protein ligase RNF123"/>
    <property type="match status" value="1"/>
</dbReference>
<dbReference type="FunFam" id="3.30.40.10:FF:000133">
    <property type="entry name" value="E3 ubiquitin-protein ligase RNF123"/>
    <property type="match status" value="1"/>
</dbReference>
<dbReference type="Gene3D" id="2.60.120.920">
    <property type="match status" value="1"/>
</dbReference>
<dbReference type="Gene3D" id="3.30.40.10">
    <property type="entry name" value="Zinc/RING finger domain, C3HC4 (zinc finger)"/>
    <property type="match status" value="1"/>
</dbReference>
<dbReference type="InterPro" id="IPR001870">
    <property type="entry name" value="B30.2/SPRY"/>
</dbReference>
<dbReference type="InterPro" id="IPR043136">
    <property type="entry name" value="B30.2/SPRY_sf"/>
</dbReference>
<dbReference type="InterPro" id="IPR013320">
    <property type="entry name" value="ConA-like_dom_sf"/>
</dbReference>
<dbReference type="InterPro" id="IPR045129">
    <property type="entry name" value="RNF123/RSPRY1-like"/>
</dbReference>
<dbReference type="InterPro" id="IPR003877">
    <property type="entry name" value="SPRY_dom"/>
</dbReference>
<dbReference type="InterPro" id="IPR035773">
    <property type="entry name" value="SPRY_RNF123"/>
</dbReference>
<dbReference type="InterPro" id="IPR001841">
    <property type="entry name" value="Znf_RING"/>
</dbReference>
<dbReference type="InterPro" id="IPR013083">
    <property type="entry name" value="Znf_RING/FYVE/PHD"/>
</dbReference>
<dbReference type="PANTHER" id="PTHR13363:SF5">
    <property type="entry name" value="E3 UBIQUITIN-PROTEIN LIGASE RNF123"/>
    <property type="match status" value="1"/>
</dbReference>
<dbReference type="PANTHER" id="PTHR13363">
    <property type="entry name" value="RING FINGER AND SRY DOMAIN-CONTAINING"/>
    <property type="match status" value="1"/>
</dbReference>
<dbReference type="Pfam" id="PF00622">
    <property type="entry name" value="SPRY"/>
    <property type="match status" value="1"/>
</dbReference>
<dbReference type="Pfam" id="PF13920">
    <property type="entry name" value="zf-C3HC4_3"/>
    <property type="match status" value="1"/>
</dbReference>
<dbReference type="SMART" id="SM00184">
    <property type="entry name" value="RING"/>
    <property type="match status" value="1"/>
</dbReference>
<dbReference type="SMART" id="SM00449">
    <property type="entry name" value="SPRY"/>
    <property type="match status" value="1"/>
</dbReference>
<dbReference type="SUPFAM" id="SSF49899">
    <property type="entry name" value="Concanavalin A-like lectins/glucanases"/>
    <property type="match status" value="1"/>
</dbReference>
<dbReference type="SUPFAM" id="SSF57850">
    <property type="entry name" value="RING/U-box"/>
    <property type="match status" value="1"/>
</dbReference>
<dbReference type="PROSITE" id="PS50188">
    <property type="entry name" value="B302_SPRY"/>
    <property type="match status" value="1"/>
</dbReference>
<dbReference type="PROSITE" id="PS50089">
    <property type="entry name" value="ZF_RING_2"/>
    <property type="match status" value="1"/>
</dbReference>
<name>RN123_HUMAN</name>
<keyword id="KW-0002">3D-structure</keyword>
<keyword id="KW-0007">Acetylation</keyword>
<keyword id="KW-0025">Alternative splicing</keyword>
<keyword id="KW-0963">Cytoplasm</keyword>
<keyword id="KW-0479">Metal-binding</keyword>
<keyword id="KW-0488">Methylation</keyword>
<keyword id="KW-0597">Phosphoprotein</keyword>
<keyword id="KW-1267">Proteomics identification</keyword>
<keyword id="KW-1185">Reference proteome</keyword>
<keyword id="KW-0808">Transferase</keyword>
<keyword id="KW-0832">Ubl conjugation</keyword>
<keyword id="KW-0833">Ubl conjugation pathway</keyword>
<keyword id="KW-0862">Zinc</keyword>
<keyword id="KW-0863">Zinc-finger</keyword>
<comment type="function">
    <text evidence="7 8 9 10 11 12">Catalytic subunit of the KPC complex that acts as E3 ubiquitin-protein ligase (PubMed:15531880, PubMed:16227581, PubMed:25860612). Promotes the ubiquitination and proteasome-mediated degradation of CDKN1B which is the cyclin-dependent kinase inhibitor at the G0-G1 transition of the cell cycle (PubMed:15531880, PubMed:16227581). Also acts as a key regulator of the NF-kappa-B signaling by promoting maturation of the NFKB1 component of NF-kappa-B: acts by catalyzing ubiquitination of the NFKB1 p105 precursor, leading to limited proteasomal degradation of NFKB1 p105 and generation of the active NFKB1 p50 subunit (PubMed:25860612, PubMed:33168738, PubMed:34873064). Also functions as an inhibitor of innate antiviral signaling mediated by RIGI and IFIH1 independently of its E3 ligase activity (PubMed:27312109). Interacts with the N-terminal CARD domains of RIGI and IFIH1 and competes with the downstream adapter MAVS (PubMed:27312109).</text>
</comment>
<comment type="catalytic activity">
    <reaction evidence="7 8 9">
        <text>S-ubiquitinyl-[E2 ubiquitin-conjugating enzyme]-L-cysteine + [acceptor protein]-L-lysine = [E2 ubiquitin-conjugating enzyme]-L-cysteine + N(6)-ubiquitinyl-[acceptor protein]-L-lysine.</text>
        <dbReference type="EC" id="2.3.2.27"/>
    </reaction>
</comment>
<comment type="pathway">
    <text evidence="7 8 9 11 12">Protein modification; protein ubiquitination.</text>
</comment>
<comment type="subunit">
    <text evidence="7 8 10">Component of the KPC complex composed of RNF123/KPC1 and UBAC1/KPC2 (PubMed:15531880, PubMed:16227581). Interacts with UBAC1 and CDKN1B via its N-terminal domain (PubMed:15531880, PubMed:16227581). Interacts with RIGI (via N-terminus) and IFIH1 (via N-terminus) (PubMed:27312109).</text>
</comment>
<comment type="interaction">
    <interactant intactId="EBI-1057418">
        <id>Q5XPI4</id>
    </interactant>
    <interactant intactId="EBI-749370">
        <id>Q9BSL1</id>
        <label>UBAC1</label>
    </interactant>
    <organismsDiffer>false</organismsDiffer>
    <experiments>3</experiments>
</comment>
<comment type="subcellular location">
    <subcellularLocation>
        <location evidence="7 10">Cytoplasm</location>
    </subcellularLocation>
</comment>
<comment type="alternative products">
    <event type="alternative splicing"/>
    <isoform>
        <id>Q5XPI4-1</id>
        <name>1</name>
        <sequence type="displayed"/>
    </isoform>
    <isoform>
        <id>Q5XPI4-2</id>
        <name>2</name>
        <sequence type="described" ref="VSP_020650"/>
    </isoform>
</comment>
<comment type="PTM">
    <text evidence="1">Ubiquitinated, leading to its degradation. Deubiquitinated by USP19, thereby stimulating CDKN1B ubiquitin-dependent degradation.</text>
</comment>
<comment type="biotechnology">
    <text evidence="12">The WILVRLW sequence, which specifically recognizes and binds NFKB1 could be used to generate a tumor-suppressive PROTA.</text>
</comment>
<comment type="miscellaneous">
    <text evidence="9 11">RNF123-mediated maturation of NFKB1 restricts tumor growth by promoting activation of the NF-kappa-B complex, leading to expression of tumor suppressor genes (PubMed:25860612, PubMed:33168738). Activation of NF-kappa-B promotes tumor suppression via CD274/PD-L1 and chemokines-mediated mechanisms (PubMed:33168738).</text>
</comment>
<comment type="sequence caution" evidence="16">
    <conflict type="erroneous initiation">
        <sequence resource="EMBL-CDS" id="BAB14139"/>
    </conflict>
</comment>
<comment type="sequence caution" evidence="16">
    <conflict type="erroneous initiation">
        <sequence resource="EMBL-CDS" id="BAB15607"/>
    </conflict>
</comment>
<proteinExistence type="evidence at protein level"/>